<reference key="1">
    <citation type="journal article" date="2009" name="BMC Genomics">
        <title>Pseudogene accumulation in the evolutionary histories of Salmonella enterica serovars Paratyphi A and Typhi.</title>
        <authorList>
            <person name="Holt K.E."/>
            <person name="Thomson N.R."/>
            <person name="Wain J."/>
            <person name="Langridge G.C."/>
            <person name="Hasan R."/>
            <person name="Bhutta Z.A."/>
            <person name="Quail M.A."/>
            <person name="Norbertczak H."/>
            <person name="Walker D."/>
            <person name="Simmonds M."/>
            <person name="White B."/>
            <person name="Bason N."/>
            <person name="Mungall K."/>
            <person name="Dougan G."/>
            <person name="Parkhill J."/>
        </authorList>
    </citation>
    <scope>NUCLEOTIDE SEQUENCE [LARGE SCALE GENOMIC DNA]</scope>
    <source>
        <strain>AKU_12601</strain>
    </source>
</reference>
<name>MEPA_SALPK</name>
<dbReference type="EC" id="3.4.24.-" evidence="1"/>
<dbReference type="EMBL" id="FM200053">
    <property type="protein sequence ID" value="CAR58574.1"/>
    <property type="molecule type" value="Genomic_DNA"/>
</dbReference>
<dbReference type="RefSeq" id="WP_000750429.1">
    <property type="nucleotide sequence ID" value="NC_011147.1"/>
</dbReference>
<dbReference type="SMR" id="B5BBA6"/>
<dbReference type="MEROPS" id="M74.001"/>
<dbReference type="KEGG" id="sek:SSPA0445"/>
<dbReference type="HOGENOM" id="CLU_052496_0_0_6"/>
<dbReference type="Proteomes" id="UP000001869">
    <property type="component" value="Chromosome"/>
</dbReference>
<dbReference type="GO" id="GO:0030288">
    <property type="term" value="C:outer membrane-bounded periplasmic space"/>
    <property type="evidence" value="ECO:0007669"/>
    <property type="project" value="InterPro"/>
</dbReference>
<dbReference type="GO" id="GO:0046872">
    <property type="term" value="F:metal ion binding"/>
    <property type="evidence" value="ECO:0007669"/>
    <property type="project" value="UniProtKB-KW"/>
</dbReference>
<dbReference type="GO" id="GO:0004222">
    <property type="term" value="F:metalloendopeptidase activity"/>
    <property type="evidence" value="ECO:0007669"/>
    <property type="project" value="UniProtKB-UniRule"/>
</dbReference>
<dbReference type="GO" id="GO:0004252">
    <property type="term" value="F:serine-type endopeptidase activity"/>
    <property type="evidence" value="ECO:0007669"/>
    <property type="project" value="InterPro"/>
</dbReference>
<dbReference type="GO" id="GO:0000270">
    <property type="term" value="P:peptidoglycan metabolic process"/>
    <property type="evidence" value="ECO:0007669"/>
    <property type="project" value="UniProtKB-UniRule"/>
</dbReference>
<dbReference type="GO" id="GO:0006508">
    <property type="term" value="P:proteolysis"/>
    <property type="evidence" value="ECO:0007669"/>
    <property type="project" value="UniProtKB-KW"/>
</dbReference>
<dbReference type="FunFam" id="3.30.1380.10:FF:000002">
    <property type="entry name" value="Penicillin-insensitive murein endopeptidase"/>
    <property type="match status" value="1"/>
</dbReference>
<dbReference type="Gene3D" id="3.30.1380.10">
    <property type="match status" value="1"/>
</dbReference>
<dbReference type="HAMAP" id="MF_01623">
    <property type="entry name" value="MepA"/>
    <property type="match status" value="1"/>
</dbReference>
<dbReference type="InterPro" id="IPR009045">
    <property type="entry name" value="Hedgehog_sig/DD-Pept_Zn-bd_sf"/>
</dbReference>
<dbReference type="InterPro" id="IPR005073">
    <property type="entry name" value="Peptidase_M74"/>
</dbReference>
<dbReference type="NCBIfam" id="NF006947">
    <property type="entry name" value="PRK09429.1"/>
    <property type="match status" value="1"/>
</dbReference>
<dbReference type="Pfam" id="PF03411">
    <property type="entry name" value="Peptidase_M74"/>
    <property type="match status" value="1"/>
</dbReference>
<dbReference type="PIRSF" id="PIRSF018455">
    <property type="entry name" value="MepA"/>
    <property type="match status" value="1"/>
</dbReference>
<dbReference type="SUPFAM" id="SSF55166">
    <property type="entry name" value="Hedgehog/DD-peptidase"/>
    <property type="match status" value="1"/>
</dbReference>
<keyword id="KW-1015">Disulfide bond</keyword>
<keyword id="KW-0378">Hydrolase</keyword>
<keyword id="KW-0479">Metal-binding</keyword>
<keyword id="KW-0482">Metalloprotease</keyword>
<keyword id="KW-0574">Periplasm</keyword>
<keyword id="KW-0645">Protease</keyword>
<keyword id="KW-0732">Signal</keyword>
<keyword id="KW-0862">Zinc</keyword>
<comment type="function">
    <text evidence="1">Murein endopeptidase that cleaves the D-alanyl-meso-2,6-diamino-pimelyl amide bond that connects peptidoglycan strands. Likely plays a role in the removal of murein from the sacculus.</text>
</comment>
<comment type="cofactor">
    <cofactor evidence="1">
        <name>Zn(2+)</name>
        <dbReference type="ChEBI" id="CHEBI:29105"/>
    </cofactor>
    <text evidence="1">Binds 2 Zn(2+) ions per subunit. Zn(2+) ion 1 is bound in the active site. Zn(2+) ion 2 is bound at the dimer interface by residues from both subunits.</text>
</comment>
<comment type="subunit">
    <text evidence="1">Dimer.</text>
</comment>
<comment type="subcellular location">
    <subcellularLocation>
        <location evidence="1">Periplasm</location>
    </subcellularLocation>
</comment>
<comment type="similarity">
    <text evidence="1">Belongs to the peptidase M74 family.</text>
</comment>
<accession>B5BBA6</accession>
<evidence type="ECO:0000255" key="1">
    <source>
        <dbReference type="HAMAP-Rule" id="MF_01623"/>
    </source>
</evidence>
<evidence type="ECO:0000256" key="2">
    <source>
        <dbReference type="SAM" id="MobiDB-lite"/>
    </source>
</evidence>
<protein>
    <recommendedName>
        <fullName evidence="1">Penicillin-insensitive murein endopeptidase</fullName>
        <ecNumber evidence="1">3.4.24.-</ecNumber>
    </recommendedName>
    <alternativeName>
        <fullName evidence="1">D-alanyl-D-alanine-endopeptidase</fullName>
        <shortName evidence="1">DD-endopeptidase</shortName>
    </alternativeName>
</protein>
<feature type="signal peptide" evidence="1">
    <location>
        <begin position="1"/>
        <end position="19"/>
    </location>
</feature>
<feature type="chain" id="PRO_1000186110" description="Penicillin-insensitive murein endopeptidase">
    <location>
        <begin position="20"/>
        <end position="274"/>
    </location>
</feature>
<feature type="region of interest" description="Disordered" evidence="2">
    <location>
        <begin position="225"/>
        <end position="274"/>
    </location>
</feature>
<feature type="binding site" evidence="1">
    <location>
        <position position="110"/>
    </location>
    <ligand>
        <name>Zn(2+)</name>
        <dbReference type="ChEBI" id="CHEBI:29105"/>
        <label>1</label>
    </ligand>
</feature>
<feature type="binding site" evidence="1">
    <location>
        <position position="113"/>
    </location>
    <ligand>
        <name>Zn(2+)</name>
        <dbReference type="ChEBI" id="CHEBI:29105"/>
        <label>1</label>
    </ligand>
</feature>
<feature type="binding site" evidence="1">
    <location>
        <position position="120"/>
    </location>
    <ligand>
        <name>Zn(2+)</name>
        <dbReference type="ChEBI" id="CHEBI:29105"/>
        <label>1</label>
    </ligand>
</feature>
<feature type="binding site" evidence="1">
    <location>
        <position position="147"/>
    </location>
    <ligand>
        <name>Zn(2+)</name>
        <dbReference type="ChEBI" id="CHEBI:29105"/>
        <label>2</label>
    </ligand>
</feature>
<feature type="binding site" evidence="1">
    <location>
        <position position="150"/>
    </location>
    <ligand>
        <name>Zn(2+)</name>
        <dbReference type="ChEBI" id="CHEBI:29105"/>
        <label>2</label>
    </ligand>
</feature>
<feature type="binding site" evidence="1">
    <location>
        <position position="211"/>
    </location>
    <ligand>
        <name>Zn(2+)</name>
        <dbReference type="ChEBI" id="CHEBI:29105"/>
        <label>1</label>
    </ligand>
</feature>
<feature type="disulfide bond" evidence="1">
    <location>
        <begin position="44"/>
        <end position="265"/>
    </location>
</feature>
<feature type="disulfide bond" evidence="1">
    <location>
        <begin position="187"/>
        <end position="235"/>
    </location>
</feature>
<feature type="disulfide bond" evidence="1">
    <location>
        <begin position="216"/>
        <end position="223"/>
    </location>
</feature>
<organism>
    <name type="scientific">Salmonella paratyphi A (strain AKU_12601)</name>
    <dbReference type="NCBI Taxonomy" id="554290"/>
    <lineage>
        <taxon>Bacteria</taxon>
        <taxon>Pseudomonadati</taxon>
        <taxon>Pseudomonadota</taxon>
        <taxon>Gammaproteobacteria</taxon>
        <taxon>Enterobacterales</taxon>
        <taxon>Enterobacteriaceae</taxon>
        <taxon>Salmonella</taxon>
    </lineage>
</organism>
<sequence>MKKTAIALLAWFVSSASLAATPWQKITHPVPGAAQSIGSFANGCIIGADTLPVQSDNYQVMRTDQRRYFGHPDLVMFIQRLSHQAQQRGLGTVLIGDMGMPAGGRFNGGHASHQTGLDVDIFLQLPKTRWSQAQLLRPQALDLVSRDGKHVVPSRWSSDIASLIKLAAQDNDVTRIFVNPAIKQQLCLDAGSDRDWLRKVRPWFQHRAHMHVRLRCPADSLECEDQPLPPPGDGCGAELQSWFEPPKPGTTKPEKKTPPPLPPSCQALLDEHVL</sequence>
<proteinExistence type="inferred from homology"/>
<gene>
    <name evidence="1" type="primary">mepA</name>
    <name type="ordered locus">SSPA0445</name>
</gene>